<sequence length="887" mass="101510">MKGLNAKPFSHEAVRQKLLSGRESLQRRYHQNRNGAALLRDHSRLVDGILRQVWHEMNMPGSTALLAVGGYGRRQLFPYSDIDLVVLLPDKGDAAEAMDNELGTRLEHWVGLLWDIGLDIGHSVRTVKECGEEAANDITVQTSLLEARLLGGNSDLFDRFLQVMETMLAPRKFFVDKQLEQQQRHKRYQDAPYKLEPNIKESPGGLRDLQNVLWISRAAGFGKTWSELAKKGFIIRREARLIQRQQTVLQDLRIRLHYLGGRREDRLLFDYQNPLAEELGIAAKPPRRPGEMLMQRYYRAARSVTQVNTILLLTLHAEIFPDEEAVTTIINERFQKRGDLLEICEEDIFERDPGAILESVLLLQQNPDLKGRSFATLRAMWRSAPLITASFRREPRHCAMFMEILRQPRGLTRELRLMNRYGILGRYIPAFGRIIGQMQHDLFHVYTVDEHILMVVRNLRRFMAPEFAYEYPLCSRLINEFERPELLYLAGLFHDIAKGRQGDHSLLGKVDARRFCERHRMPAEDTELVVWLVENHLHMSATAQKKDIADAEVIADFAASMRDERHLIALYLLTVSDIRGTSPKVWNAWKGKLLEDLFHRTRQYLCGETALTDISLENRKNKVLQLLHPDDAAMRAYERFWSGLDSSYLMMHDPREIAWHTQHLSQRMKSPAPIVKTRAAETGAGVEVLVYTADQKDLFARICSFFDGIDYNIVQAKIHTTREGYALDSFLVLDPFNVANHDPREFQFIEQELTQQLEQQALMATPVKGRLSRHLRHFPITPQVSIEPDDSGAYYVLSITAGDQSGLLSRIAQVLVRFGLNVHSARINTLGERAEDTFLVTGSILSNSRSVIQLEANLIKVLHTSPQPETPGKAPGKPSAGDRIIPR</sequence>
<comment type="function">
    <text evidence="1">Modifies, by uridylylation and deuridylylation, the PII regulatory proteins (GlnB and homologs), in response to the nitrogen status of the cell that GlnD senses through the glutamine level. Under low glutamine levels, catalyzes the conversion of the PII proteins and UTP to PII-UMP and PPi, while under higher glutamine levels, GlnD hydrolyzes PII-UMP to PII and UMP (deuridylylation). Thus, controls uridylylation state and activity of the PII proteins, and plays an important role in the regulation of nitrogen assimilation and metabolism.</text>
</comment>
<comment type="catalytic activity">
    <reaction evidence="1">
        <text>[protein-PII]-L-tyrosine + UTP = [protein-PII]-uridylyl-L-tyrosine + diphosphate</text>
        <dbReference type="Rhea" id="RHEA:13673"/>
        <dbReference type="Rhea" id="RHEA-COMP:12147"/>
        <dbReference type="Rhea" id="RHEA-COMP:12148"/>
        <dbReference type="ChEBI" id="CHEBI:33019"/>
        <dbReference type="ChEBI" id="CHEBI:46398"/>
        <dbReference type="ChEBI" id="CHEBI:46858"/>
        <dbReference type="ChEBI" id="CHEBI:90602"/>
        <dbReference type="EC" id="2.7.7.59"/>
    </reaction>
</comment>
<comment type="catalytic activity">
    <reaction evidence="1">
        <text>[protein-PII]-uridylyl-L-tyrosine + H2O = [protein-PII]-L-tyrosine + UMP + H(+)</text>
        <dbReference type="Rhea" id="RHEA:48600"/>
        <dbReference type="Rhea" id="RHEA-COMP:12147"/>
        <dbReference type="Rhea" id="RHEA-COMP:12148"/>
        <dbReference type="ChEBI" id="CHEBI:15377"/>
        <dbReference type="ChEBI" id="CHEBI:15378"/>
        <dbReference type="ChEBI" id="CHEBI:46858"/>
        <dbReference type="ChEBI" id="CHEBI:57865"/>
        <dbReference type="ChEBI" id="CHEBI:90602"/>
    </reaction>
</comment>
<comment type="cofactor">
    <cofactor evidence="1">
        <name>Mg(2+)</name>
        <dbReference type="ChEBI" id="CHEBI:18420"/>
    </cofactor>
</comment>
<comment type="activity regulation">
    <text evidence="1">Uridylyltransferase (UTase) activity is inhibited by glutamine, while glutamine activates uridylyl-removing (UR) activity.</text>
</comment>
<comment type="domain">
    <text evidence="1">Has four distinct domains: an N-terminal nucleotidyltransferase (NT) domain responsible for UTase activity, a central HD domain that encodes UR activity, and two C-terminal ACT domains that seem to have a role in glutamine sensing.</text>
</comment>
<comment type="similarity">
    <text evidence="1">Belongs to the GlnD family.</text>
</comment>
<organism>
    <name type="scientific">Nitrosospira multiformis (strain ATCC 25196 / NCIMB 11849 / C 71)</name>
    <dbReference type="NCBI Taxonomy" id="323848"/>
    <lineage>
        <taxon>Bacteria</taxon>
        <taxon>Pseudomonadati</taxon>
        <taxon>Pseudomonadota</taxon>
        <taxon>Betaproteobacteria</taxon>
        <taxon>Nitrosomonadales</taxon>
        <taxon>Nitrosomonadaceae</taxon>
        <taxon>Nitrosospira</taxon>
    </lineage>
</organism>
<dbReference type="EC" id="2.7.7.59" evidence="1"/>
<dbReference type="EC" id="3.1.4.-" evidence="1"/>
<dbReference type="EMBL" id="CP000103">
    <property type="protein sequence ID" value="ABB75920.1"/>
    <property type="molecule type" value="Genomic_DNA"/>
</dbReference>
<dbReference type="RefSeq" id="WP_011381917.1">
    <property type="nucleotide sequence ID" value="NC_007614.1"/>
</dbReference>
<dbReference type="SMR" id="Q2Y5Q1"/>
<dbReference type="STRING" id="323848.Nmul_A2633"/>
<dbReference type="KEGG" id="nmu:Nmul_A2633"/>
<dbReference type="eggNOG" id="COG2844">
    <property type="taxonomic scope" value="Bacteria"/>
</dbReference>
<dbReference type="HOGENOM" id="CLU_012833_1_0_4"/>
<dbReference type="OrthoDB" id="9758038at2"/>
<dbReference type="Proteomes" id="UP000002718">
    <property type="component" value="Chromosome"/>
</dbReference>
<dbReference type="GO" id="GO:0008773">
    <property type="term" value="F:[protein-PII] uridylyltransferase activity"/>
    <property type="evidence" value="ECO:0007669"/>
    <property type="project" value="UniProtKB-UniRule"/>
</dbReference>
<dbReference type="GO" id="GO:0008081">
    <property type="term" value="F:phosphoric diester hydrolase activity"/>
    <property type="evidence" value="ECO:0007669"/>
    <property type="project" value="UniProtKB-UniRule"/>
</dbReference>
<dbReference type="GO" id="GO:0006808">
    <property type="term" value="P:regulation of nitrogen utilization"/>
    <property type="evidence" value="ECO:0007669"/>
    <property type="project" value="UniProtKB-UniRule"/>
</dbReference>
<dbReference type="CDD" id="cd04899">
    <property type="entry name" value="ACT_ACR-UUR-like_2"/>
    <property type="match status" value="1"/>
</dbReference>
<dbReference type="CDD" id="cd04900">
    <property type="entry name" value="ACT_UUR-like_1"/>
    <property type="match status" value="1"/>
</dbReference>
<dbReference type="CDD" id="cd00077">
    <property type="entry name" value="HDc"/>
    <property type="match status" value="1"/>
</dbReference>
<dbReference type="CDD" id="cd05401">
    <property type="entry name" value="NT_GlnE_GlnD_like"/>
    <property type="match status" value="1"/>
</dbReference>
<dbReference type="Gene3D" id="3.30.70.260">
    <property type="match status" value="1"/>
</dbReference>
<dbReference type="Gene3D" id="1.10.3090.10">
    <property type="entry name" value="cca-adding enzyme, domain 2"/>
    <property type="match status" value="1"/>
</dbReference>
<dbReference type="HAMAP" id="MF_00277">
    <property type="entry name" value="PII_uridylyl_transf"/>
    <property type="match status" value="1"/>
</dbReference>
<dbReference type="InterPro" id="IPR045865">
    <property type="entry name" value="ACT-like_dom_sf"/>
</dbReference>
<dbReference type="InterPro" id="IPR002912">
    <property type="entry name" value="ACT_dom"/>
</dbReference>
<dbReference type="InterPro" id="IPR003607">
    <property type="entry name" value="HD/PDEase_dom"/>
</dbReference>
<dbReference type="InterPro" id="IPR006674">
    <property type="entry name" value="HD_domain"/>
</dbReference>
<dbReference type="InterPro" id="IPR043519">
    <property type="entry name" value="NT_sf"/>
</dbReference>
<dbReference type="InterPro" id="IPR013546">
    <property type="entry name" value="PII_UdlTrfase/GS_AdlTrfase"/>
</dbReference>
<dbReference type="InterPro" id="IPR010043">
    <property type="entry name" value="UTase/UR"/>
</dbReference>
<dbReference type="NCBIfam" id="NF002837">
    <property type="entry name" value="PRK03059.1"/>
    <property type="match status" value="1"/>
</dbReference>
<dbReference type="NCBIfam" id="TIGR01693">
    <property type="entry name" value="UTase_glnD"/>
    <property type="match status" value="1"/>
</dbReference>
<dbReference type="PANTHER" id="PTHR47320">
    <property type="entry name" value="BIFUNCTIONAL URIDYLYLTRANSFERASE/URIDYLYL-REMOVING ENZYME"/>
    <property type="match status" value="1"/>
</dbReference>
<dbReference type="PANTHER" id="PTHR47320:SF1">
    <property type="entry name" value="BIFUNCTIONAL URIDYLYLTRANSFERASE_URIDYLYL-REMOVING ENZYME"/>
    <property type="match status" value="1"/>
</dbReference>
<dbReference type="Pfam" id="PF08335">
    <property type="entry name" value="GlnD_UR_UTase"/>
    <property type="match status" value="1"/>
</dbReference>
<dbReference type="Pfam" id="PF01966">
    <property type="entry name" value="HD"/>
    <property type="match status" value="1"/>
</dbReference>
<dbReference type="PIRSF" id="PIRSF006288">
    <property type="entry name" value="PII_uridyltransf"/>
    <property type="match status" value="1"/>
</dbReference>
<dbReference type="SMART" id="SM00471">
    <property type="entry name" value="HDc"/>
    <property type="match status" value="1"/>
</dbReference>
<dbReference type="SUPFAM" id="SSF55021">
    <property type="entry name" value="ACT-like"/>
    <property type="match status" value="2"/>
</dbReference>
<dbReference type="SUPFAM" id="SSF109604">
    <property type="entry name" value="HD-domain/PDEase-like"/>
    <property type="match status" value="1"/>
</dbReference>
<dbReference type="SUPFAM" id="SSF81301">
    <property type="entry name" value="Nucleotidyltransferase"/>
    <property type="match status" value="1"/>
</dbReference>
<dbReference type="SUPFAM" id="SSF81593">
    <property type="entry name" value="Nucleotidyltransferase substrate binding subunit/domain"/>
    <property type="match status" value="1"/>
</dbReference>
<dbReference type="PROSITE" id="PS51671">
    <property type="entry name" value="ACT"/>
    <property type="match status" value="2"/>
</dbReference>
<dbReference type="PROSITE" id="PS51831">
    <property type="entry name" value="HD"/>
    <property type="match status" value="1"/>
</dbReference>
<proteinExistence type="inferred from homology"/>
<evidence type="ECO:0000255" key="1">
    <source>
        <dbReference type="HAMAP-Rule" id="MF_00277"/>
    </source>
</evidence>
<evidence type="ECO:0000255" key="2">
    <source>
        <dbReference type="PROSITE-ProRule" id="PRU01175"/>
    </source>
</evidence>
<evidence type="ECO:0000256" key="3">
    <source>
        <dbReference type="SAM" id="MobiDB-lite"/>
    </source>
</evidence>
<gene>
    <name evidence="1" type="primary">glnD</name>
    <name type="ordered locus">Nmul_A2633</name>
</gene>
<accession>Q2Y5Q1</accession>
<name>GLND_NITMU</name>
<keyword id="KW-0378">Hydrolase</keyword>
<keyword id="KW-0460">Magnesium</keyword>
<keyword id="KW-0511">Multifunctional enzyme</keyword>
<keyword id="KW-0548">Nucleotidyltransferase</keyword>
<keyword id="KW-1185">Reference proteome</keyword>
<keyword id="KW-0677">Repeat</keyword>
<keyword id="KW-0808">Transferase</keyword>
<protein>
    <recommendedName>
        <fullName evidence="1">Bifunctional uridylyltransferase/uridylyl-removing enzyme</fullName>
        <shortName evidence="1">UTase/UR</shortName>
    </recommendedName>
    <alternativeName>
        <fullName evidence="1">Bifunctional [protein-PII] modification enzyme</fullName>
    </alternativeName>
    <alternativeName>
        <fullName evidence="1">Bifunctional nitrogen sensor protein</fullName>
    </alternativeName>
    <domain>
        <recommendedName>
            <fullName evidence="1">[Protein-PII] uridylyltransferase</fullName>
            <shortName evidence="1">PII uridylyltransferase</shortName>
            <shortName evidence="1">UTase</shortName>
            <ecNumber evidence="1">2.7.7.59</ecNumber>
        </recommendedName>
    </domain>
    <domain>
        <recommendedName>
            <fullName evidence="1">[Protein-PII]-UMP uridylyl-removing enzyme</fullName>
            <shortName evidence="1">UR</shortName>
            <ecNumber evidence="1">3.1.4.-</ecNumber>
        </recommendedName>
    </domain>
</protein>
<reference key="1">
    <citation type="submission" date="2005-08" db="EMBL/GenBank/DDBJ databases">
        <title>Complete sequence of chromosome 1 of Nitrosospira multiformis ATCC 25196.</title>
        <authorList>
            <person name="Copeland A."/>
            <person name="Lucas S."/>
            <person name="Lapidus A."/>
            <person name="Barry K."/>
            <person name="Detter J.C."/>
            <person name="Glavina T."/>
            <person name="Hammon N."/>
            <person name="Israni S."/>
            <person name="Pitluck S."/>
            <person name="Chain P."/>
            <person name="Malfatti S."/>
            <person name="Shin M."/>
            <person name="Vergez L."/>
            <person name="Schmutz J."/>
            <person name="Larimer F."/>
            <person name="Land M."/>
            <person name="Hauser L."/>
            <person name="Kyrpides N."/>
            <person name="Lykidis A."/>
            <person name="Richardson P."/>
        </authorList>
    </citation>
    <scope>NUCLEOTIDE SEQUENCE [LARGE SCALE GENOMIC DNA]</scope>
    <source>
        <strain>ATCC 25196 / NCIMB 11849 / C 71</strain>
    </source>
</reference>
<feature type="chain" id="PRO_0000231684" description="Bifunctional uridylyltransferase/uridylyl-removing enzyme">
    <location>
        <begin position="1"/>
        <end position="887"/>
    </location>
</feature>
<feature type="domain" description="HD" evidence="2">
    <location>
        <begin position="448"/>
        <end position="570"/>
    </location>
</feature>
<feature type="domain" description="ACT 1" evidence="1">
    <location>
        <begin position="687"/>
        <end position="772"/>
    </location>
</feature>
<feature type="domain" description="ACT 2" evidence="1">
    <location>
        <begin position="796"/>
        <end position="871"/>
    </location>
</feature>
<feature type="region of interest" description="Uridylyltransferase">
    <location>
        <begin position="1"/>
        <end position="329"/>
    </location>
</feature>
<feature type="region of interest" description="Uridylyl-removing">
    <location>
        <begin position="330"/>
        <end position="686"/>
    </location>
</feature>
<feature type="region of interest" description="Disordered" evidence="3">
    <location>
        <begin position="864"/>
        <end position="887"/>
    </location>
</feature>